<feature type="chain" id="PRO_0000248247" description="Taste receptor type 2 member 102">
    <location>
        <begin position="1"/>
        <end position="327"/>
    </location>
</feature>
<feature type="topological domain" description="Extracellular" evidence="1">
    <location>
        <begin position="1"/>
        <end position="7"/>
    </location>
</feature>
<feature type="transmembrane region" description="Helical; Name=1" evidence="1">
    <location>
        <begin position="8"/>
        <end position="28"/>
    </location>
</feature>
<feature type="topological domain" description="Cytoplasmic" evidence="1">
    <location>
        <begin position="29"/>
        <end position="46"/>
    </location>
</feature>
<feature type="transmembrane region" description="Helical; Name=2" evidence="1">
    <location>
        <begin position="47"/>
        <end position="67"/>
    </location>
</feature>
<feature type="topological domain" description="Extracellular" evidence="1">
    <location>
        <begin position="68"/>
        <end position="87"/>
    </location>
</feature>
<feature type="transmembrane region" description="Helical; Name=3" evidence="1">
    <location>
        <begin position="88"/>
        <end position="108"/>
    </location>
</feature>
<feature type="topological domain" description="Cytoplasmic" evidence="1">
    <location>
        <begin position="109"/>
        <end position="124"/>
    </location>
</feature>
<feature type="transmembrane region" description="Helical; Name=4" evidence="1">
    <location>
        <begin position="125"/>
        <end position="145"/>
    </location>
</feature>
<feature type="topological domain" description="Extracellular" evidence="1">
    <location>
        <begin position="146"/>
        <end position="179"/>
    </location>
</feature>
<feature type="transmembrane region" description="Helical; Name=5" evidence="1">
    <location>
        <begin position="180"/>
        <end position="200"/>
    </location>
</feature>
<feature type="topological domain" description="Cytoplasmic" evidence="1">
    <location>
        <begin position="201"/>
        <end position="229"/>
    </location>
</feature>
<feature type="transmembrane region" description="Helical; Name=6" evidence="1">
    <location>
        <begin position="230"/>
        <end position="250"/>
    </location>
</feature>
<feature type="topological domain" description="Extracellular" evidence="1">
    <location>
        <begin position="251"/>
        <end position="260"/>
    </location>
</feature>
<feature type="transmembrane region" description="Helical; Name=7" evidence="1">
    <location>
        <begin position="261"/>
        <end position="281"/>
    </location>
</feature>
<feature type="topological domain" description="Cytoplasmic" evidence="1">
    <location>
        <begin position="282"/>
        <end position="327"/>
    </location>
</feature>
<feature type="glycosylation site" description="N-linked (GlcNAc...) asparagine" evidence="1">
    <location>
        <position position="159"/>
    </location>
</feature>
<feature type="glycosylation site" description="N-linked (GlcNAc...) asparagine" evidence="1">
    <location>
        <position position="179"/>
    </location>
</feature>
<comment type="function">
    <text evidence="2">Putative taste receptor which may play a role in the perception of bitterness.</text>
</comment>
<comment type="subcellular location">
    <subcellularLocation>
        <location evidence="2">Membrane</location>
        <topology evidence="2">Multi-pass membrane protein</topology>
    </subcellularLocation>
</comment>
<comment type="miscellaneous">
    <text evidence="2">Several bitter taste receptors are expressed in a single taste receptor cell.</text>
</comment>
<comment type="similarity">
    <text evidence="1">Belongs to the G-protein coupled receptor T2R family.</text>
</comment>
<proteinExistence type="inferred from homology"/>
<dbReference type="EMBL" id="AY486337">
    <property type="protein sequence ID" value="AAS57908.1"/>
    <property type="molecule type" value="Genomic_DNA"/>
</dbReference>
<dbReference type="RefSeq" id="NP_001028836.1">
    <property type="nucleotide sequence ID" value="NM_001033664.1"/>
</dbReference>
<dbReference type="SMR" id="Q675C0"/>
<dbReference type="STRING" id="10116.ENSRNOP00000048055"/>
<dbReference type="GlyCosmos" id="Q675C0">
    <property type="glycosylation" value="2 sites, No reported glycans"/>
</dbReference>
<dbReference type="GlyGen" id="Q675C0">
    <property type="glycosylation" value="2 sites"/>
</dbReference>
<dbReference type="PaxDb" id="10116-ENSRNOP00000048055"/>
<dbReference type="Ensembl" id="ENSRNOT00000050359.6">
    <property type="protein sequence ID" value="ENSRNOP00000048055.6"/>
    <property type="gene ID" value="ENSRNOG00000030993.6"/>
</dbReference>
<dbReference type="GeneID" id="500347"/>
<dbReference type="UCSC" id="RGD:1564838">
    <property type="organism name" value="rat"/>
</dbReference>
<dbReference type="AGR" id="RGD:1564838"/>
<dbReference type="RGD" id="1564838">
    <property type="gene designation" value="Tas2r102"/>
</dbReference>
<dbReference type="eggNOG" id="ENOG502TE6X">
    <property type="taxonomic scope" value="Eukaryota"/>
</dbReference>
<dbReference type="InParanoid" id="Q675C0"/>
<dbReference type="OrthoDB" id="8876749at2759"/>
<dbReference type="PhylomeDB" id="Q675C0"/>
<dbReference type="TreeFam" id="TF335891"/>
<dbReference type="PRO" id="PR:Q675C0"/>
<dbReference type="Proteomes" id="UP000002494">
    <property type="component" value="Chromosome 4"/>
</dbReference>
<dbReference type="GO" id="GO:0016020">
    <property type="term" value="C:membrane"/>
    <property type="evidence" value="ECO:0000318"/>
    <property type="project" value="GO_Central"/>
</dbReference>
<dbReference type="GO" id="GO:0033038">
    <property type="term" value="F:bitter taste receptor activity"/>
    <property type="evidence" value="ECO:0000318"/>
    <property type="project" value="GO_Central"/>
</dbReference>
<dbReference type="GO" id="GO:0004930">
    <property type="term" value="F:G protein-coupled receptor activity"/>
    <property type="evidence" value="ECO:0007669"/>
    <property type="project" value="UniProtKB-KW"/>
</dbReference>
<dbReference type="GO" id="GO:0001580">
    <property type="term" value="P:detection of chemical stimulus involved in sensory perception of bitter taste"/>
    <property type="evidence" value="ECO:0000318"/>
    <property type="project" value="GO_Central"/>
</dbReference>
<dbReference type="FunFam" id="1.20.1070.10:FF:000042">
    <property type="entry name" value="Taste receptor type 2 member 7"/>
    <property type="match status" value="1"/>
</dbReference>
<dbReference type="Gene3D" id="1.20.1070.10">
    <property type="entry name" value="Rhodopsin 7-helix transmembrane proteins"/>
    <property type="match status" value="1"/>
</dbReference>
<dbReference type="InterPro" id="IPR007960">
    <property type="entry name" value="TAS2R"/>
</dbReference>
<dbReference type="PANTHER" id="PTHR11394">
    <property type="entry name" value="TASTE RECEPTOR TYPE 2"/>
    <property type="match status" value="1"/>
</dbReference>
<dbReference type="PANTHER" id="PTHR11394:SF60">
    <property type="entry name" value="TASTE RECEPTOR TYPE 2 MEMBER 102"/>
    <property type="match status" value="1"/>
</dbReference>
<dbReference type="Pfam" id="PF05296">
    <property type="entry name" value="TAS2R"/>
    <property type="match status" value="1"/>
</dbReference>
<dbReference type="SUPFAM" id="SSF81321">
    <property type="entry name" value="Family A G protein-coupled receptor-like"/>
    <property type="match status" value="1"/>
</dbReference>
<organism>
    <name type="scientific">Rattus norvegicus</name>
    <name type="common">Rat</name>
    <dbReference type="NCBI Taxonomy" id="10116"/>
    <lineage>
        <taxon>Eukaryota</taxon>
        <taxon>Metazoa</taxon>
        <taxon>Chordata</taxon>
        <taxon>Craniata</taxon>
        <taxon>Vertebrata</taxon>
        <taxon>Euteleostomi</taxon>
        <taxon>Mammalia</taxon>
        <taxon>Eutheria</taxon>
        <taxon>Euarchontoglires</taxon>
        <taxon>Glires</taxon>
        <taxon>Rodentia</taxon>
        <taxon>Myomorpha</taxon>
        <taxon>Muroidea</taxon>
        <taxon>Muridae</taxon>
        <taxon>Murinae</taxon>
        <taxon>Rattus</taxon>
    </lineage>
</organism>
<evidence type="ECO:0000255" key="1"/>
<evidence type="ECO:0000305" key="2"/>
<evidence type="ECO:0000312" key="3">
    <source>
        <dbReference type="EMBL" id="AAS57908.1"/>
    </source>
</evidence>
<evidence type="ECO:0000312" key="4">
    <source>
        <dbReference type="RGD" id="1564838"/>
    </source>
</evidence>
<protein>
    <recommendedName>
        <fullName>Taste receptor type 2 member 102</fullName>
        <shortName>T2R102</shortName>
    </recommendedName>
    <alternativeName>
        <fullName>Taste receptor type 2 member 37</fullName>
        <shortName>T2R37</shortName>
    </alternativeName>
</protein>
<sequence>MEPVIYSFATLLIHVEFIFGNLSNGFIVLSNFWDWVIKRKLSTIDKILLTLAISRITLIWEIYTWFTSVYGPSSFAIGMKLQILYFTWILSSHFSLWFATALSIFYLLRIANCSWKIFLYLKWRLKQVIVGMLLASLVFLPGILTQRTLEERPYRYGGNTSEDSMETDFARFTELILFNLTIFSVIPFSLASISFLLLIFSLWKHLRKMQLSSRGHGDPSTKAHTNALRIMVSFLLLYSIYFLSLLLSWIAQKHHSKLVDIIGIITGLMYPSAHSFILILGNSKLMQTSLWILSHLRCRLKGENILNPSGNQVTSCYIFCIANKSVS</sequence>
<gene>
    <name evidence="4" type="primary">Tas2r102</name>
    <name type="synonym">Tas2r37</name>
</gene>
<accession>Q675C0</accession>
<reference evidence="3" key="1">
    <citation type="submission" date="2003-11" db="EMBL/GenBank/DDBJ databases">
        <title>Identification of new putative rat taste receptors belonging to the T2R family.</title>
        <authorList>
            <person name="Conte C."/>
            <person name="Ebeling M."/>
            <person name="Marcuz A."/>
            <person name="Andres-Barquin P.J."/>
        </authorList>
    </citation>
    <scope>NUCLEOTIDE SEQUENCE [GENOMIC DNA]</scope>
    <source>
        <strain evidence="3">Sprague-Dawley</strain>
    </source>
</reference>
<name>TR102_RAT</name>
<keyword id="KW-0297">G-protein coupled receptor</keyword>
<keyword id="KW-0325">Glycoprotein</keyword>
<keyword id="KW-0472">Membrane</keyword>
<keyword id="KW-0675">Receptor</keyword>
<keyword id="KW-1185">Reference proteome</keyword>
<keyword id="KW-0716">Sensory transduction</keyword>
<keyword id="KW-0919">Taste</keyword>
<keyword id="KW-0807">Transducer</keyword>
<keyword id="KW-0812">Transmembrane</keyword>
<keyword id="KW-1133">Transmembrane helix</keyword>